<proteinExistence type="inferred from homology"/>
<comment type="function">
    <text evidence="1">Hydrolyzes with equal efficiency cytidine or uridine to ribose and cytosine or uracil, respectively.</text>
</comment>
<comment type="similarity">
    <text evidence="1">Belongs to the IUNH family. RihA subfamily.</text>
</comment>
<gene>
    <name evidence="1" type="primary">rihA</name>
    <name type="ordered locus">EC55989_0645</name>
</gene>
<evidence type="ECO:0000255" key="1">
    <source>
        <dbReference type="HAMAP-Rule" id="MF_01431"/>
    </source>
</evidence>
<protein>
    <recommendedName>
        <fullName evidence="1">Pyrimidine-specific ribonucleoside hydrolase RihA</fullName>
        <ecNumber evidence="1">3.2.-.-</ecNumber>
    </recommendedName>
    <alternativeName>
        <fullName evidence="1">Cytidine/uridine-specific hydrolase</fullName>
    </alternativeName>
</protein>
<keyword id="KW-0326">Glycosidase</keyword>
<keyword id="KW-0378">Hydrolase</keyword>
<keyword id="KW-1185">Reference proteome</keyword>
<dbReference type="EC" id="3.2.-.-" evidence="1"/>
<dbReference type="EMBL" id="CU928145">
    <property type="protein sequence ID" value="CAU96517.1"/>
    <property type="molecule type" value="Genomic_DNA"/>
</dbReference>
<dbReference type="RefSeq" id="WP_001207503.1">
    <property type="nucleotide sequence ID" value="NC_011748.1"/>
</dbReference>
<dbReference type="SMR" id="B7L9J7"/>
<dbReference type="GeneID" id="75204988"/>
<dbReference type="KEGG" id="eck:EC55989_0645"/>
<dbReference type="HOGENOM" id="CLU_036838_2_0_6"/>
<dbReference type="Proteomes" id="UP000000746">
    <property type="component" value="Chromosome"/>
</dbReference>
<dbReference type="GO" id="GO:0005829">
    <property type="term" value="C:cytosol"/>
    <property type="evidence" value="ECO:0007669"/>
    <property type="project" value="TreeGrafter"/>
</dbReference>
<dbReference type="GO" id="GO:0008477">
    <property type="term" value="F:purine nucleosidase activity"/>
    <property type="evidence" value="ECO:0007669"/>
    <property type="project" value="TreeGrafter"/>
</dbReference>
<dbReference type="GO" id="GO:0045437">
    <property type="term" value="F:uridine nucleosidase activity"/>
    <property type="evidence" value="ECO:0007669"/>
    <property type="project" value="InterPro"/>
</dbReference>
<dbReference type="GO" id="GO:0015949">
    <property type="term" value="P:nucleobase-containing small molecule interconversion"/>
    <property type="evidence" value="ECO:0007669"/>
    <property type="project" value="InterPro"/>
</dbReference>
<dbReference type="GO" id="GO:0006152">
    <property type="term" value="P:purine nucleoside catabolic process"/>
    <property type="evidence" value="ECO:0007669"/>
    <property type="project" value="TreeGrafter"/>
</dbReference>
<dbReference type="GO" id="GO:0006206">
    <property type="term" value="P:pyrimidine nucleobase metabolic process"/>
    <property type="evidence" value="ECO:0007669"/>
    <property type="project" value="UniProtKB-UniRule"/>
</dbReference>
<dbReference type="CDD" id="cd02651">
    <property type="entry name" value="nuc_hydro_IU_UC_XIUA"/>
    <property type="match status" value="1"/>
</dbReference>
<dbReference type="FunFam" id="3.90.245.10:FF:000001">
    <property type="entry name" value="Pyrimidine-specific ribonucleoside hydrolase RihA"/>
    <property type="match status" value="1"/>
</dbReference>
<dbReference type="Gene3D" id="3.90.245.10">
    <property type="entry name" value="Ribonucleoside hydrolase-like"/>
    <property type="match status" value="1"/>
</dbReference>
<dbReference type="HAMAP" id="MF_01431">
    <property type="entry name" value="Pyrim_hydro_RihA"/>
    <property type="match status" value="1"/>
</dbReference>
<dbReference type="InterPro" id="IPR015910">
    <property type="entry name" value="I/U_nuclsd_hydro_CS"/>
</dbReference>
<dbReference type="InterPro" id="IPR001910">
    <property type="entry name" value="Inosine/uridine_hydrolase_dom"/>
</dbReference>
<dbReference type="InterPro" id="IPR023186">
    <property type="entry name" value="IUNH"/>
</dbReference>
<dbReference type="InterPro" id="IPR022975">
    <property type="entry name" value="Pyrim_hydro_RihA"/>
</dbReference>
<dbReference type="InterPro" id="IPR036452">
    <property type="entry name" value="Ribo_hydro-like"/>
</dbReference>
<dbReference type="NCBIfam" id="NF007761">
    <property type="entry name" value="PRK10443.1"/>
    <property type="match status" value="1"/>
</dbReference>
<dbReference type="PANTHER" id="PTHR12304">
    <property type="entry name" value="INOSINE-URIDINE PREFERRING NUCLEOSIDE HYDROLASE"/>
    <property type="match status" value="1"/>
</dbReference>
<dbReference type="PANTHER" id="PTHR12304:SF4">
    <property type="entry name" value="URIDINE NUCLEOSIDASE"/>
    <property type="match status" value="1"/>
</dbReference>
<dbReference type="Pfam" id="PF01156">
    <property type="entry name" value="IU_nuc_hydro"/>
    <property type="match status" value="1"/>
</dbReference>
<dbReference type="SUPFAM" id="SSF53590">
    <property type="entry name" value="Nucleoside hydrolase"/>
    <property type="match status" value="1"/>
</dbReference>
<dbReference type="PROSITE" id="PS01247">
    <property type="entry name" value="IUNH"/>
    <property type="match status" value="1"/>
</dbReference>
<organism>
    <name type="scientific">Escherichia coli (strain 55989 / EAEC)</name>
    <dbReference type="NCBI Taxonomy" id="585055"/>
    <lineage>
        <taxon>Bacteria</taxon>
        <taxon>Pseudomonadati</taxon>
        <taxon>Pseudomonadota</taxon>
        <taxon>Gammaproteobacteria</taxon>
        <taxon>Enterobacterales</taxon>
        <taxon>Enterobacteriaceae</taxon>
        <taxon>Escherichia</taxon>
    </lineage>
</organism>
<name>RIHA_ECO55</name>
<accession>B7L9J7</accession>
<sequence>MALPILLDCDPGHDDAIAIVLALASPELDVKAITSSAGNQTPEKTLRNVLRMLTLLNRTDIPVAGGAVKPLMRELIIADNVHGESGLDGPALPEPAFAPQNCTAVELMAKTLRESAEPVTIVSTGPQTNVALLLNSHPELHSKIARIVIMGGAMGLGNWTPAAEFNIYVDPEAAEIVFQSGIPVVMAGLDVTHKAQIHVEDTERFRAIGNPVSTIVAELLDFFLEYHKDEKWGFVGAPLHDPCTIAWLLKPELFTTVERWVGVETQGKYTQGMTVVDYYYLTGNKPNATVMVDVDRQGFVDLLADRLKFYA</sequence>
<reference key="1">
    <citation type="journal article" date="2009" name="PLoS Genet.">
        <title>Organised genome dynamics in the Escherichia coli species results in highly diverse adaptive paths.</title>
        <authorList>
            <person name="Touchon M."/>
            <person name="Hoede C."/>
            <person name="Tenaillon O."/>
            <person name="Barbe V."/>
            <person name="Baeriswyl S."/>
            <person name="Bidet P."/>
            <person name="Bingen E."/>
            <person name="Bonacorsi S."/>
            <person name="Bouchier C."/>
            <person name="Bouvet O."/>
            <person name="Calteau A."/>
            <person name="Chiapello H."/>
            <person name="Clermont O."/>
            <person name="Cruveiller S."/>
            <person name="Danchin A."/>
            <person name="Diard M."/>
            <person name="Dossat C."/>
            <person name="Karoui M.E."/>
            <person name="Frapy E."/>
            <person name="Garry L."/>
            <person name="Ghigo J.M."/>
            <person name="Gilles A.M."/>
            <person name="Johnson J."/>
            <person name="Le Bouguenec C."/>
            <person name="Lescat M."/>
            <person name="Mangenot S."/>
            <person name="Martinez-Jehanne V."/>
            <person name="Matic I."/>
            <person name="Nassif X."/>
            <person name="Oztas S."/>
            <person name="Petit M.A."/>
            <person name="Pichon C."/>
            <person name="Rouy Z."/>
            <person name="Ruf C.S."/>
            <person name="Schneider D."/>
            <person name="Tourret J."/>
            <person name="Vacherie B."/>
            <person name="Vallenet D."/>
            <person name="Medigue C."/>
            <person name="Rocha E.P.C."/>
            <person name="Denamur E."/>
        </authorList>
    </citation>
    <scope>NUCLEOTIDE SEQUENCE [LARGE SCALE GENOMIC DNA]</scope>
    <source>
        <strain>55989 / EAEC</strain>
    </source>
</reference>
<feature type="chain" id="PRO_1000184893" description="Pyrimidine-specific ribonucleoside hydrolase RihA">
    <location>
        <begin position="1"/>
        <end position="311"/>
    </location>
</feature>
<feature type="active site" evidence="1">
    <location>
        <position position="240"/>
    </location>
</feature>